<keyword id="KW-0025">Alternative splicing</keyword>
<keyword id="KW-0067">ATP-binding</keyword>
<keyword id="KW-0963">Cytoplasm</keyword>
<keyword id="KW-0903">Direct protein sequencing</keyword>
<keyword id="KW-0347">Helicase</keyword>
<keyword id="KW-0378">Hydrolase</keyword>
<keyword id="KW-1271">Inflammasome</keyword>
<keyword id="KW-0547">Nucleotide-binding</keyword>
<keyword id="KW-0539">Nucleus</keyword>
<keyword id="KW-1267">Proteomics identification</keyword>
<keyword id="KW-1185">Reference proteome</keyword>
<keyword id="KW-0832">Ubl conjugation</keyword>
<sequence>MPEEAGFPPAKRFRPGSGPPSRAGSFPPGRQVVMLLTAGSGGRGGGGGRRQQPPLAQPSASPYPEAVELQRRSLPIFQARGQLLAQLRNLDNAVLIGETGSGKTTQIPQYLYEGGISRQGIIAVTQPRRVAAISLATRVSDEKRTELGKLVGYTVRFDDVTSEDTRIKFLTDGMLLREAISDSLLRKYSCVILDEAHERTIHTDVLFGVVKAAQKRRKELGKLPLKVIVMSATMDVDLFSQYFNGAPVLYLEGRQHPIQVFYTKQPQNDYLHAALVSVFQIHQEAPSSQDILVFLTGQEEIEAMSKTCRDIAKHLPDGCPAMLVLPLYASLPYAQQLRVFQGAPKGYRKVIISTNIAETSITITGIKYVVDTGMVKAKKYNPDSGLEVLAVQRVSKTQAWQRTGRAGREDSGICYRLYTEDEFEKFDKMTVPEIQRCNLASVMLQLLAMKVPNVLTFDFMSKPSPDHIQAAIAQLDLLGALEHKDDQLTLTPMGRKMAAFPLEPKFAKTILMSPKFHCTEEILTIVSLLSVDSVLHNPPSRREEVQGVRKKFISSEGDHMTLLNIYRTFKNLGGNKDWCKENFVNSKNMTLVAEVRAQLRDICLKMSMPIASSRGDVESVRRCLAHSLFMSTAELQPDGTYATTDTHQPVAIHPSSVLFHCKPACVVYTELLYTNKCYMRDLCVIDAQWLYEAAPEYFRRKLRTARN</sequence>
<evidence type="ECO:0000250" key="1"/>
<evidence type="ECO:0000250" key="2">
    <source>
        <dbReference type="UniProtKB" id="Q80VY9"/>
    </source>
</evidence>
<evidence type="ECO:0000255" key="3">
    <source>
        <dbReference type="PROSITE-ProRule" id="PRU00541"/>
    </source>
</evidence>
<evidence type="ECO:0000255" key="4">
    <source>
        <dbReference type="PROSITE-ProRule" id="PRU00542"/>
    </source>
</evidence>
<evidence type="ECO:0000256" key="5">
    <source>
        <dbReference type="SAM" id="MobiDB-lite"/>
    </source>
</evidence>
<evidence type="ECO:0000269" key="6">
    <source>
    </source>
</evidence>
<evidence type="ECO:0000269" key="7">
    <source>
    </source>
</evidence>
<evidence type="ECO:0000269" key="8">
    <source>
    </source>
</evidence>
<evidence type="ECO:0000303" key="9">
    <source>
    </source>
</evidence>
<evidence type="ECO:0000303" key="10">
    <source>
    </source>
</evidence>
<evidence type="ECO:0000305" key="11"/>
<evidence type="ECO:0000312" key="12">
    <source>
        <dbReference type="HGNC" id="HGNC:16718"/>
    </source>
</evidence>
<proteinExistence type="evidence at protein level"/>
<protein>
    <recommendedName>
        <fullName evidence="11">ATP-dependent RNA helicase DHX33</fullName>
        <ecNumber>3.6.4.13</ecNumber>
    </recommendedName>
    <alternativeName>
        <fullName>DEAH box protein 33</fullName>
    </alternativeName>
</protein>
<dbReference type="EC" id="3.6.4.13"/>
<dbReference type="EMBL" id="AK025625">
    <property type="protein sequence ID" value="BAB15193.1"/>
    <property type="molecule type" value="mRNA"/>
</dbReference>
<dbReference type="EMBL" id="AK026944">
    <property type="protein sequence ID" value="BAB15596.1"/>
    <property type="molecule type" value="mRNA"/>
</dbReference>
<dbReference type="EMBL" id="AK295074">
    <property type="protein sequence ID" value="BAG58120.1"/>
    <property type="molecule type" value="mRNA"/>
</dbReference>
<dbReference type="EMBL" id="AC004148">
    <property type="status" value="NOT_ANNOTATED_CDS"/>
    <property type="molecule type" value="Genomic_DNA"/>
</dbReference>
<dbReference type="EMBL" id="CH471108">
    <property type="protein sequence ID" value="EAW90332.1"/>
    <property type="molecule type" value="Genomic_DNA"/>
</dbReference>
<dbReference type="EMBL" id="BC030017">
    <property type="protein sequence ID" value="AAH30017.1"/>
    <property type="status" value="ALT_INIT"/>
    <property type="molecule type" value="mRNA"/>
</dbReference>
<dbReference type="EMBL" id="CR936655">
    <property type="protein sequence ID" value="CAI56793.1"/>
    <property type="molecule type" value="mRNA"/>
</dbReference>
<dbReference type="CCDS" id="CCDS11072.1">
    <molecule id="Q9H6R0-1"/>
</dbReference>
<dbReference type="RefSeq" id="NP_001186628.1">
    <molecule id="Q9H6R0-2"/>
    <property type="nucleotide sequence ID" value="NM_001199699.2"/>
</dbReference>
<dbReference type="RefSeq" id="NP_064547.2">
    <molecule id="Q9H6R0-1"/>
    <property type="nucleotide sequence ID" value="NM_020162.3"/>
</dbReference>
<dbReference type="RefSeq" id="XP_016880366.1">
    <property type="nucleotide sequence ID" value="XM_017024877.1"/>
</dbReference>
<dbReference type="SMR" id="Q9H6R0"/>
<dbReference type="BioGRID" id="121247">
    <property type="interactions" value="86"/>
</dbReference>
<dbReference type="FunCoup" id="Q9H6R0">
    <property type="interactions" value="2784"/>
</dbReference>
<dbReference type="IntAct" id="Q9H6R0">
    <property type="interactions" value="44"/>
</dbReference>
<dbReference type="MINT" id="Q9H6R0"/>
<dbReference type="STRING" id="9606.ENSP00000225296"/>
<dbReference type="iPTMnet" id="Q9H6R0"/>
<dbReference type="PhosphoSitePlus" id="Q9H6R0"/>
<dbReference type="BioMuta" id="DHX33"/>
<dbReference type="DMDM" id="296434478"/>
<dbReference type="jPOST" id="Q9H6R0"/>
<dbReference type="MassIVE" id="Q9H6R0"/>
<dbReference type="PaxDb" id="9606-ENSP00000225296"/>
<dbReference type="PeptideAtlas" id="Q9H6R0"/>
<dbReference type="ProteomicsDB" id="81012">
    <molecule id="Q9H6R0-1"/>
</dbReference>
<dbReference type="ProteomicsDB" id="81013">
    <molecule id="Q9H6R0-2"/>
</dbReference>
<dbReference type="Pumba" id="Q9H6R0"/>
<dbReference type="Antibodypedia" id="23699">
    <property type="antibodies" value="73 antibodies from 11 providers"/>
</dbReference>
<dbReference type="DNASU" id="56919"/>
<dbReference type="Ensembl" id="ENST00000225296.8">
    <molecule id="Q9H6R0-1"/>
    <property type="protein sequence ID" value="ENSP00000225296.3"/>
    <property type="gene ID" value="ENSG00000005100.13"/>
</dbReference>
<dbReference type="GeneID" id="56919"/>
<dbReference type="KEGG" id="hsa:56919"/>
<dbReference type="MANE-Select" id="ENST00000225296.8">
    <property type="protein sequence ID" value="ENSP00000225296.3"/>
    <property type="RefSeq nucleotide sequence ID" value="NM_020162.4"/>
    <property type="RefSeq protein sequence ID" value="NP_064547.2"/>
</dbReference>
<dbReference type="UCSC" id="uc002gca.3">
    <molecule id="Q9H6R0-1"/>
    <property type="organism name" value="human"/>
</dbReference>
<dbReference type="AGR" id="HGNC:16718"/>
<dbReference type="CTD" id="56919"/>
<dbReference type="DisGeNET" id="56919"/>
<dbReference type="GeneCards" id="DHX33"/>
<dbReference type="HGNC" id="HGNC:16718">
    <property type="gene designation" value="DHX33"/>
</dbReference>
<dbReference type="HPA" id="ENSG00000005100">
    <property type="expression patterns" value="Low tissue specificity"/>
</dbReference>
<dbReference type="MIM" id="614405">
    <property type="type" value="gene"/>
</dbReference>
<dbReference type="neXtProt" id="NX_Q9H6R0"/>
<dbReference type="OpenTargets" id="ENSG00000005100"/>
<dbReference type="PharmGKB" id="PA27220"/>
<dbReference type="VEuPathDB" id="HostDB:ENSG00000005100"/>
<dbReference type="eggNOG" id="KOG0922">
    <property type="taxonomic scope" value="Eukaryota"/>
</dbReference>
<dbReference type="GeneTree" id="ENSGT00940000156747"/>
<dbReference type="HOGENOM" id="CLU_001832_5_11_1"/>
<dbReference type="InParanoid" id="Q9H6R0"/>
<dbReference type="OMA" id="CHENFLH"/>
<dbReference type="OrthoDB" id="10253254at2759"/>
<dbReference type="PAN-GO" id="Q9H6R0">
    <property type="GO annotations" value="4 GO annotations based on evolutionary models"/>
</dbReference>
<dbReference type="PhylomeDB" id="Q9H6R0"/>
<dbReference type="TreeFam" id="TF354245"/>
<dbReference type="PathwayCommons" id="Q9H6R0"/>
<dbReference type="SignaLink" id="Q9H6R0"/>
<dbReference type="SIGNOR" id="Q9H6R0"/>
<dbReference type="BioGRID-ORCS" id="56919">
    <property type="hits" value="638 hits in 1159 CRISPR screens"/>
</dbReference>
<dbReference type="CD-CODE" id="91857CE7">
    <property type="entry name" value="Nucleolus"/>
</dbReference>
<dbReference type="CD-CODE" id="975B8A70">
    <property type="entry name" value="Inflammasome"/>
</dbReference>
<dbReference type="CD-CODE" id="DEE660B4">
    <property type="entry name" value="Stress granule"/>
</dbReference>
<dbReference type="ChiTaRS" id="DHX33">
    <property type="organism name" value="human"/>
</dbReference>
<dbReference type="GenomeRNAi" id="56919"/>
<dbReference type="Pharos" id="Q9H6R0">
    <property type="development level" value="Tbio"/>
</dbReference>
<dbReference type="PRO" id="PR:Q9H6R0"/>
<dbReference type="Proteomes" id="UP000005640">
    <property type="component" value="Chromosome 17"/>
</dbReference>
<dbReference type="RNAct" id="Q9H6R0">
    <property type="molecule type" value="protein"/>
</dbReference>
<dbReference type="Bgee" id="ENSG00000005100">
    <property type="expression patterns" value="Expressed in secondary oocyte and 187 other cell types or tissues"/>
</dbReference>
<dbReference type="ExpressionAtlas" id="Q9H6R0">
    <property type="expression patterns" value="baseline and differential"/>
</dbReference>
<dbReference type="GO" id="GO:0005737">
    <property type="term" value="C:cytoplasm"/>
    <property type="evidence" value="ECO:0000314"/>
    <property type="project" value="UniProtKB"/>
</dbReference>
<dbReference type="GO" id="GO:0072559">
    <property type="term" value="C:NLRP3 inflammasome complex"/>
    <property type="evidence" value="ECO:0000314"/>
    <property type="project" value="UniProtKB"/>
</dbReference>
<dbReference type="GO" id="GO:0005730">
    <property type="term" value="C:nucleolus"/>
    <property type="evidence" value="ECO:0000314"/>
    <property type="project" value="HPA"/>
</dbReference>
<dbReference type="GO" id="GO:0005654">
    <property type="term" value="C:nucleoplasm"/>
    <property type="evidence" value="ECO:0000314"/>
    <property type="project" value="UniProtKB"/>
</dbReference>
<dbReference type="GO" id="GO:0005634">
    <property type="term" value="C:nucleus"/>
    <property type="evidence" value="ECO:0000314"/>
    <property type="project" value="UniProtKB"/>
</dbReference>
<dbReference type="GO" id="GO:0005524">
    <property type="term" value="F:ATP binding"/>
    <property type="evidence" value="ECO:0007669"/>
    <property type="project" value="UniProtKB-KW"/>
</dbReference>
<dbReference type="GO" id="GO:0016887">
    <property type="term" value="F:ATP hydrolysis activity"/>
    <property type="evidence" value="ECO:0007669"/>
    <property type="project" value="RHEA"/>
</dbReference>
<dbReference type="GO" id="GO:0140297">
    <property type="term" value="F:DNA-binding transcription factor binding"/>
    <property type="evidence" value="ECO:0007669"/>
    <property type="project" value="Ensembl"/>
</dbReference>
<dbReference type="GO" id="GO:0003725">
    <property type="term" value="F:double-stranded RNA binding"/>
    <property type="evidence" value="ECO:0000314"/>
    <property type="project" value="UniProtKB"/>
</dbReference>
<dbReference type="GO" id="GO:0004386">
    <property type="term" value="F:helicase activity"/>
    <property type="evidence" value="ECO:0000318"/>
    <property type="project" value="GO_Central"/>
</dbReference>
<dbReference type="GO" id="GO:0003729">
    <property type="term" value="F:mRNA binding"/>
    <property type="evidence" value="ECO:0000314"/>
    <property type="project" value="UniProtKB"/>
</dbReference>
<dbReference type="GO" id="GO:0000182">
    <property type="term" value="F:rDNA binding"/>
    <property type="evidence" value="ECO:0000314"/>
    <property type="project" value="UniProtKB"/>
</dbReference>
<dbReference type="GO" id="GO:0043023">
    <property type="term" value="F:ribosomal large subunit binding"/>
    <property type="evidence" value="ECO:0000353"/>
    <property type="project" value="UniProtKB"/>
</dbReference>
<dbReference type="GO" id="GO:0003723">
    <property type="term" value="F:RNA binding"/>
    <property type="evidence" value="ECO:0007005"/>
    <property type="project" value="UniProtKB"/>
</dbReference>
<dbReference type="GO" id="GO:0003724">
    <property type="term" value="F:RNA helicase activity"/>
    <property type="evidence" value="ECO:0007669"/>
    <property type="project" value="UniProtKB-EC"/>
</dbReference>
<dbReference type="GO" id="GO:0043410">
    <property type="term" value="P:positive regulation of MAPK cascade"/>
    <property type="evidence" value="ECO:0000250"/>
    <property type="project" value="UniProtKB"/>
</dbReference>
<dbReference type="GO" id="GO:0051092">
    <property type="term" value="P:positive regulation of NF-kappaB transcription factor activity"/>
    <property type="evidence" value="ECO:0000250"/>
    <property type="project" value="UniProtKB"/>
</dbReference>
<dbReference type="GO" id="GO:1900227">
    <property type="term" value="P:positive regulation of NLRP3 inflammasome complex assembly"/>
    <property type="evidence" value="ECO:0000314"/>
    <property type="project" value="UniProtKB"/>
</dbReference>
<dbReference type="GO" id="GO:0045943">
    <property type="term" value="P:positive regulation of transcription by RNA polymerase I"/>
    <property type="evidence" value="ECO:0000314"/>
    <property type="project" value="UniProtKB"/>
</dbReference>
<dbReference type="GO" id="GO:0032481">
    <property type="term" value="P:positive regulation of type I interferon production"/>
    <property type="evidence" value="ECO:0000250"/>
    <property type="project" value="UniProtKB"/>
</dbReference>
<dbReference type="GO" id="GO:0006413">
    <property type="term" value="P:translational initiation"/>
    <property type="evidence" value="ECO:0007669"/>
    <property type="project" value="Ensembl"/>
</dbReference>
<dbReference type="CDD" id="cd17978">
    <property type="entry name" value="DEXHc_DHX33"/>
    <property type="match status" value="1"/>
</dbReference>
<dbReference type="CDD" id="cd18791">
    <property type="entry name" value="SF2_C_RHA"/>
    <property type="match status" value="1"/>
</dbReference>
<dbReference type="FunFam" id="1.20.120.1080:FF:000037">
    <property type="entry name" value="ATP-dependent RNA helicase DHX33"/>
    <property type="match status" value="1"/>
</dbReference>
<dbReference type="FunFam" id="3.40.50.300:FF:000145">
    <property type="entry name" value="probable ATP-dependent RNA helicase DHX40"/>
    <property type="match status" value="1"/>
</dbReference>
<dbReference type="FunFam" id="3.40.50.300:FF:000750">
    <property type="entry name" value="Putative ATP-dependent RNA helicase DHX33"/>
    <property type="match status" value="1"/>
</dbReference>
<dbReference type="Gene3D" id="1.20.120.1080">
    <property type="match status" value="1"/>
</dbReference>
<dbReference type="Gene3D" id="3.40.50.300">
    <property type="entry name" value="P-loop containing nucleotide triphosphate hydrolases"/>
    <property type="match status" value="2"/>
</dbReference>
<dbReference type="InterPro" id="IPR011709">
    <property type="entry name" value="DEAD-box_helicase_OB_fold"/>
</dbReference>
<dbReference type="InterPro" id="IPR011545">
    <property type="entry name" value="DEAD/DEAH_box_helicase_dom"/>
</dbReference>
<dbReference type="InterPro" id="IPR002464">
    <property type="entry name" value="DNA/RNA_helicase_DEAH_CS"/>
</dbReference>
<dbReference type="InterPro" id="IPR048333">
    <property type="entry name" value="HA2_WH"/>
</dbReference>
<dbReference type="InterPro" id="IPR007502">
    <property type="entry name" value="Helicase-assoc_dom"/>
</dbReference>
<dbReference type="InterPro" id="IPR014001">
    <property type="entry name" value="Helicase_ATP-bd"/>
</dbReference>
<dbReference type="InterPro" id="IPR001650">
    <property type="entry name" value="Helicase_C-like"/>
</dbReference>
<dbReference type="InterPro" id="IPR027417">
    <property type="entry name" value="P-loop_NTPase"/>
</dbReference>
<dbReference type="PANTHER" id="PTHR18934">
    <property type="entry name" value="ATP-DEPENDENT RNA HELICASE"/>
    <property type="match status" value="1"/>
</dbReference>
<dbReference type="PANTHER" id="PTHR18934:SF118">
    <property type="entry name" value="ATP-DEPENDENT RNA HELICASE DHX33"/>
    <property type="match status" value="1"/>
</dbReference>
<dbReference type="Pfam" id="PF00270">
    <property type="entry name" value="DEAD"/>
    <property type="match status" value="1"/>
</dbReference>
<dbReference type="Pfam" id="PF21010">
    <property type="entry name" value="HA2_C"/>
    <property type="match status" value="1"/>
</dbReference>
<dbReference type="Pfam" id="PF04408">
    <property type="entry name" value="HA2_N"/>
    <property type="match status" value="1"/>
</dbReference>
<dbReference type="Pfam" id="PF00271">
    <property type="entry name" value="Helicase_C"/>
    <property type="match status" value="1"/>
</dbReference>
<dbReference type="Pfam" id="PF07717">
    <property type="entry name" value="OB_NTP_bind"/>
    <property type="match status" value="1"/>
</dbReference>
<dbReference type="SMART" id="SM00487">
    <property type="entry name" value="DEXDc"/>
    <property type="match status" value="1"/>
</dbReference>
<dbReference type="SMART" id="SM00847">
    <property type="entry name" value="HA2"/>
    <property type="match status" value="1"/>
</dbReference>
<dbReference type="SMART" id="SM00490">
    <property type="entry name" value="HELICc"/>
    <property type="match status" value="1"/>
</dbReference>
<dbReference type="SUPFAM" id="SSF52540">
    <property type="entry name" value="P-loop containing nucleoside triphosphate hydrolases"/>
    <property type="match status" value="1"/>
</dbReference>
<dbReference type="PROSITE" id="PS00690">
    <property type="entry name" value="DEAH_ATP_HELICASE"/>
    <property type="match status" value="1"/>
</dbReference>
<dbReference type="PROSITE" id="PS51192">
    <property type="entry name" value="HELICASE_ATP_BIND_1"/>
    <property type="match status" value="1"/>
</dbReference>
<dbReference type="PROSITE" id="PS51194">
    <property type="entry name" value="HELICASE_CTER"/>
    <property type="match status" value="1"/>
</dbReference>
<organism>
    <name type="scientific">Homo sapiens</name>
    <name type="common">Human</name>
    <dbReference type="NCBI Taxonomy" id="9606"/>
    <lineage>
        <taxon>Eukaryota</taxon>
        <taxon>Metazoa</taxon>
        <taxon>Chordata</taxon>
        <taxon>Craniata</taxon>
        <taxon>Vertebrata</taxon>
        <taxon>Euteleostomi</taxon>
        <taxon>Mammalia</taxon>
        <taxon>Eutheria</taxon>
        <taxon>Euarchontoglires</taxon>
        <taxon>Primates</taxon>
        <taxon>Haplorrhini</taxon>
        <taxon>Catarrhini</taxon>
        <taxon>Hominidae</taxon>
        <taxon>Homo</taxon>
    </lineage>
</organism>
<reference key="1">
    <citation type="journal article" date="2004" name="Nat. Genet.">
        <title>Complete sequencing and characterization of 21,243 full-length human cDNAs.</title>
        <authorList>
            <person name="Ota T."/>
            <person name="Suzuki Y."/>
            <person name="Nishikawa T."/>
            <person name="Otsuki T."/>
            <person name="Sugiyama T."/>
            <person name="Irie R."/>
            <person name="Wakamatsu A."/>
            <person name="Hayashi K."/>
            <person name="Sato H."/>
            <person name="Nagai K."/>
            <person name="Kimura K."/>
            <person name="Makita H."/>
            <person name="Sekine M."/>
            <person name="Obayashi M."/>
            <person name="Nishi T."/>
            <person name="Shibahara T."/>
            <person name="Tanaka T."/>
            <person name="Ishii S."/>
            <person name="Yamamoto J."/>
            <person name="Saito K."/>
            <person name="Kawai Y."/>
            <person name="Isono Y."/>
            <person name="Nakamura Y."/>
            <person name="Nagahari K."/>
            <person name="Murakami K."/>
            <person name="Yasuda T."/>
            <person name="Iwayanagi T."/>
            <person name="Wagatsuma M."/>
            <person name="Shiratori A."/>
            <person name="Sudo H."/>
            <person name="Hosoiri T."/>
            <person name="Kaku Y."/>
            <person name="Kodaira H."/>
            <person name="Kondo H."/>
            <person name="Sugawara M."/>
            <person name="Takahashi M."/>
            <person name="Kanda K."/>
            <person name="Yokoi T."/>
            <person name="Furuya T."/>
            <person name="Kikkawa E."/>
            <person name="Omura Y."/>
            <person name="Abe K."/>
            <person name="Kamihara K."/>
            <person name="Katsuta N."/>
            <person name="Sato K."/>
            <person name="Tanikawa M."/>
            <person name="Yamazaki M."/>
            <person name="Ninomiya K."/>
            <person name="Ishibashi T."/>
            <person name="Yamashita H."/>
            <person name="Murakawa K."/>
            <person name="Fujimori K."/>
            <person name="Tanai H."/>
            <person name="Kimata M."/>
            <person name="Watanabe M."/>
            <person name="Hiraoka S."/>
            <person name="Chiba Y."/>
            <person name="Ishida S."/>
            <person name="Ono Y."/>
            <person name="Takiguchi S."/>
            <person name="Watanabe S."/>
            <person name="Yosida M."/>
            <person name="Hotuta T."/>
            <person name="Kusano J."/>
            <person name="Kanehori K."/>
            <person name="Takahashi-Fujii A."/>
            <person name="Hara H."/>
            <person name="Tanase T.-O."/>
            <person name="Nomura Y."/>
            <person name="Togiya S."/>
            <person name="Komai F."/>
            <person name="Hara R."/>
            <person name="Takeuchi K."/>
            <person name="Arita M."/>
            <person name="Imose N."/>
            <person name="Musashino K."/>
            <person name="Yuuki H."/>
            <person name="Oshima A."/>
            <person name="Sasaki N."/>
            <person name="Aotsuka S."/>
            <person name="Yoshikawa Y."/>
            <person name="Matsunawa H."/>
            <person name="Ichihara T."/>
            <person name="Shiohata N."/>
            <person name="Sano S."/>
            <person name="Moriya S."/>
            <person name="Momiyama H."/>
            <person name="Satoh N."/>
            <person name="Takami S."/>
            <person name="Terashima Y."/>
            <person name="Suzuki O."/>
            <person name="Nakagawa S."/>
            <person name="Senoh A."/>
            <person name="Mizoguchi H."/>
            <person name="Goto Y."/>
            <person name="Shimizu F."/>
            <person name="Wakebe H."/>
            <person name="Hishigaki H."/>
            <person name="Watanabe T."/>
            <person name="Sugiyama A."/>
            <person name="Takemoto M."/>
            <person name="Kawakami B."/>
            <person name="Yamazaki M."/>
            <person name="Watanabe K."/>
            <person name="Kumagai A."/>
            <person name="Itakura S."/>
            <person name="Fukuzumi Y."/>
            <person name="Fujimori Y."/>
            <person name="Komiyama M."/>
            <person name="Tashiro H."/>
            <person name="Tanigami A."/>
            <person name="Fujiwara T."/>
            <person name="Ono T."/>
            <person name="Yamada K."/>
            <person name="Fujii Y."/>
            <person name="Ozaki K."/>
            <person name="Hirao M."/>
            <person name="Ohmori Y."/>
            <person name="Kawabata A."/>
            <person name="Hikiji T."/>
            <person name="Kobatake N."/>
            <person name="Inagaki H."/>
            <person name="Ikema Y."/>
            <person name="Okamoto S."/>
            <person name="Okitani R."/>
            <person name="Kawakami T."/>
            <person name="Noguchi S."/>
            <person name="Itoh T."/>
            <person name="Shigeta K."/>
            <person name="Senba T."/>
            <person name="Matsumura K."/>
            <person name="Nakajima Y."/>
            <person name="Mizuno T."/>
            <person name="Morinaga M."/>
            <person name="Sasaki M."/>
            <person name="Togashi T."/>
            <person name="Oyama M."/>
            <person name="Hata H."/>
            <person name="Watanabe M."/>
            <person name="Komatsu T."/>
            <person name="Mizushima-Sugano J."/>
            <person name="Satoh T."/>
            <person name="Shirai Y."/>
            <person name="Takahashi Y."/>
            <person name="Nakagawa K."/>
            <person name="Okumura K."/>
            <person name="Nagase T."/>
            <person name="Nomura N."/>
            <person name="Kikuchi H."/>
            <person name="Masuho Y."/>
            <person name="Yamashita R."/>
            <person name="Nakai K."/>
            <person name="Yada T."/>
            <person name="Nakamura Y."/>
            <person name="Ohara O."/>
            <person name="Isogai T."/>
            <person name="Sugano S."/>
        </authorList>
    </citation>
    <scope>NUCLEOTIDE SEQUENCE [LARGE SCALE MRNA] (ISOFORMS 1 AND 2)</scope>
    <source>
        <tissue>Brain</tissue>
        <tissue>Hepatoma</tissue>
    </source>
</reference>
<reference key="2">
    <citation type="journal article" date="2006" name="Nature">
        <title>DNA sequence of human chromosome 17 and analysis of rearrangement in the human lineage.</title>
        <authorList>
            <person name="Zody M.C."/>
            <person name="Garber M."/>
            <person name="Adams D.J."/>
            <person name="Sharpe T."/>
            <person name="Harrow J."/>
            <person name="Lupski J.R."/>
            <person name="Nicholson C."/>
            <person name="Searle S.M."/>
            <person name="Wilming L."/>
            <person name="Young S.K."/>
            <person name="Abouelleil A."/>
            <person name="Allen N.R."/>
            <person name="Bi W."/>
            <person name="Bloom T."/>
            <person name="Borowsky M.L."/>
            <person name="Bugalter B.E."/>
            <person name="Butler J."/>
            <person name="Chang J.L."/>
            <person name="Chen C.-K."/>
            <person name="Cook A."/>
            <person name="Corum B."/>
            <person name="Cuomo C.A."/>
            <person name="de Jong P.J."/>
            <person name="DeCaprio D."/>
            <person name="Dewar K."/>
            <person name="FitzGerald M."/>
            <person name="Gilbert J."/>
            <person name="Gibson R."/>
            <person name="Gnerre S."/>
            <person name="Goldstein S."/>
            <person name="Grafham D.V."/>
            <person name="Grocock R."/>
            <person name="Hafez N."/>
            <person name="Hagopian D.S."/>
            <person name="Hart E."/>
            <person name="Norman C.H."/>
            <person name="Humphray S."/>
            <person name="Jaffe D.B."/>
            <person name="Jones M."/>
            <person name="Kamal M."/>
            <person name="Khodiyar V.K."/>
            <person name="LaButti K."/>
            <person name="Laird G."/>
            <person name="Lehoczky J."/>
            <person name="Liu X."/>
            <person name="Lokyitsang T."/>
            <person name="Loveland J."/>
            <person name="Lui A."/>
            <person name="Macdonald P."/>
            <person name="Major J.E."/>
            <person name="Matthews L."/>
            <person name="Mauceli E."/>
            <person name="McCarroll S.A."/>
            <person name="Mihalev A.H."/>
            <person name="Mudge J."/>
            <person name="Nguyen C."/>
            <person name="Nicol R."/>
            <person name="O'Leary S.B."/>
            <person name="Osoegawa K."/>
            <person name="Schwartz D.C."/>
            <person name="Shaw-Smith C."/>
            <person name="Stankiewicz P."/>
            <person name="Steward C."/>
            <person name="Swarbreck D."/>
            <person name="Venkataraman V."/>
            <person name="Whittaker C.A."/>
            <person name="Yang X."/>
            <person name="Zimmer A.R."/>
            <person name="Bradley A."/>
            <person name="Hubbard T."/>
            <person name="Birren B.W."/>
            <person name="Rogers J."/>
            <person name="Lander E.S."/>
            <person name="Nusbaum C."/>
        </authorList>
    </citation>
    <scope>NUCLEOTIDE SEQUENCE [LARGE SCALE GENOMIC DNA]</scope>
</reference>
<reference key="3">
    <citation type="submission" date="2005-09" db="EMBL/GenBank/DDBJ databases">
        <authorList>
            <person name="Mural R.J."/>
            <person name="Istrail S."/>
            <person name="Sutton G.G."/>
            <person name="Florea L."/>
            <person name="Halpern A.L."/>
            <person name="Mobarry C.M."/>
            <person name="Lippert R."/>
            <person name="Walenz B."/>
            <person name="Shatkay H."/>
            <person name="Dew I."/>
            <person name="Miller J.R."/>
            <person name="Flanigan M.J."/>
            <person name="Edwards N.J."/>
            <person name="Bolanos R."/>
            <person name="Fasulo D."/>
            <person name="Halldorsson B.V."/>
            <person name="Hannenhalli S."/>
            <person name="Turner R."/>
            <person name="Yooseph S."/>
            <person name="Lu F."/>
            <person name="Nusskern D.R."/>
            <person name="Shue B.C."/>
            <person name="Zheng X.H."/>
            <person name="Zhong F."/>
            <person name="Delcher A.L."/>
            <person name="Huson D.H."/>
            <person name="Kravitz S.A."/>
            <person name="Mouchard L."/>
            <person name="Reinert K."/>
            <person name="Remington K.A."/>
            <person name="Clark A.G."/>
            <person name="Waterman M.S."/>
            <person name="Eichler E.E."/>
            <person name="Adams M.D."/>
            <person name="Hunkapiller M.W."/>
            <person name="Myers E.W."/>
            <person name="Venter J.C."/>
        </authorList>
    </citation>
    <scope>NUCLEOTIDE SEQUENCE [LARGE SCALE GENOMIC DNA]</scope>
</reference>
<reference key="4">
    <citation type="journal article" date="2004" name="Genome Res.">
        <title>The status, quality, and expansion of the NIH full-length cDNA project: the Mammalian Gene Collection (MGC).</title>
        <authorList>
            <consortium name="The MGC Project Team"/>
        </authorList>
    </citation>
    <scope>NUCLEOTIDE SEQUENCE [LARGE SCALE MRNA] (ISOFORM 2)</scope>
    <source>
        <tissue>Testis</tissue>
    </source>
</reference>
<reference key="5">
    <citation type="submission" date="2005-08" db="UniProtKB">
        <authorList>
            <person name="Bienvenut W.V."/>
        </authorList>
    </citation>
    <scope>PROTEIN SEQUENCE OF 119-128; 130-138 AND 200-211</scope>
    <scope>SUBCELLULAR LOCATION</scope>
    <scope>IDENTIFICATION BY MASS SPECTROMETRY</scope>
    <source>
        <tissue>Cervix carcinoma</tissue>
    </source>
</reference>
<reference key="6">
    <citation type="journal article" date="2007" name="BMC Genomics">
        <title>The full-ORF clone resource of the German cDNA consortium.</title>
        <authorList>
            <person name="Bechtel S."/>
            <person name="Rosenfelder H."/>
            <person name="Duda A."/>
            <person name="Schmidt C.P."/>
            <person name="Ernst U."/>
            <person name="Wellenreuther R."/>
            <person name="Mehrle A."/>
            <person name="Schuster C."/>
            <person name="Bahr A."/>
            <person name="Bloecker H."/>
            <person name="Heubner D."/>
            <person name="Hoerlein A."/>
            <person name="Michel G."/>
            <person name="Wedler H."/>
            <person name="Koehrer K."/>
            <person name="Ottenwaelder B."/>
            <person name="Poustka A."/>
            <person name="Wiemann S."/>
            <person name="Schupp I."/>
        </authorList>
    </citation>
    <scope>NUCLEOTIDE SEQUENCE [LARGE SCALE MRNA] OF 293-707</scope>
    <source>
        <tissue>Melanoma</tissue>
    </source>
</reference>
<reference key="7">
    <citation type="journal article" date="2011" name="Mol. Cell. Biol.">
        <title>Identification of DHX33 as a mediator of rRNA synthesis and cell growth.</title>
        <authorList>
            <person name="Zhang Y."/>
            <person name="Forys J.T."/>
            <person name="Miceli A.P."/>
            <person name="Gwinn A.S."/>
            <person name="Weber J.D."/>
        </authorList>
    </citation>
    <scope>FUNCTION</scope>
    <scope>ASSOCIATION WITH RIBOSOMAL DNA LOCI</scope>
    <scope>INTERACTION WITH UBTF</scope>
    <scope>SUBCELLULAR LOCATION</scope>
</reference>
<reference key="8">
    <citation type="journal article" date="2013" name="Immunity">
        <title>The DHX33 RNA helicase senses cytosolic RNA and activates the NLRP3 inflammasome.</title>
        <authorList>
            <person name="Mitoma H."/>
            <person name="Hanabuchi S."/>
            <person name="Kim T."/>
            <person name="Bao M."/>
            <person name="Zhang Z."/>
            <person name="Sugimoto N."/>
            <person name="Liu Y.J."/>
        </authorList>
    </citation>
    <scope>FUNCTION</scope>
    <scope>DOUBLE-STRANDED RNA-BINDING</scope>
    <scope>MUTAGENESIS OF LYS-103</scope>
    <scope>INTERACTION WITH NLRP3</scope>
    <scope>SUBCELLULAR LOCATION</scope>
</reference>
<reference key="9">
    <citation type="journal article" date="2015" name="Mol. Cell. Biol.">
        <title>The DHX33 RNA Helicase Promotes mRNA Translation Initiation.</title>
        <authorList>
            <person name="Zhang Y."/>
            <person name="You J."/>
            <person name="Wang X."/>
            <person name="Weber J."/>
        </authorList>
    </citation>
    <scope>FUNCTION</scope>
    <scope>SUBCELLULAR LOCATION</scope>
    <scope>INTERACTION WITH DDX3X; EIF3G; EIF3H; RPL3; RPL7; RPL26 AND RPL27</scope>
    <scope>RNA-BINDING</scope>
</reference>
<comment type="function">
    <text evidence="2 6 7 8">Implicated in nucleolar organization, ribosome biogenesis, protein synthesis and cytoplasmic dsRNA sensing (By similarity) (PubMed:21930779, PubMed:23871209, PubMed:26100019). Stimulates RNA polymerase I transcription of the 47S precursor rRNA. Associates with ribosomal DNA (rDNA) loci where it is involved in POLR1A recruitment (PubMed:21930779). In the cytoplasm, promotes elongation-competent 80S ribosome assembly at the late stage of mRNA translation initiation (PubMed:26100019). Senses cytosolic dsRNA mediating NLRP3 inflammasome formation in macrophages and type I interferon production in myeloid dendritic cells (PubMed:23871209). Required for NLRP3 activation induced by viral dsRNA and bacterial RNA (PubMed:23871209). In dendritic cells, required for induction of type I interferon production induced by cytoplasmic dsRNA via the activation of MAPK and NF-kappa-B signaling pathways (By similarity).</text>
</comment>
<comment type="catalytic activity">
    <reaction>
        <text>ATP + H2O = ADP + phosphate + H(+)</text>
        <dbReference type="Rhea" id="RHEA:13065"/>
        <dbReference type="ChEBI" id="CHEBI:15377"/>
        <dbReference type="ChEBI" id="CHEBI:15378"/>
        <dbReference type="ChEBI" id="CHEBI:30616"/>
        <dbReference type="ChEBI" id="CHEBI:43474"/>
        <dbReference type="ChEBI" id="CHEBI:456216"/>
        <dbReference type="EC" id="3.6.4.13"/>
    </reaction>
</comment>
<comment type="subunit">
    <text evidence="2 6 7 8">Interacts with UBTF (PubMed:21930779). Interacts with DDX3X, EIF3G and EIF3H; the interaction is independent of RNA (PubMed:26100019). Interacts (via HA2 region and Helicase C-terminal domain) with the components of the large ribosomal subunit RPL3, RPL7, RPL26 and RPL27 (PubMed:26100019). Interacts (via DEAH box) with NLRP3 (via NACHT domain) (PubMed:23871209). Binds to mRNA (PubMed:26100019). Binds to double-stranded RNA (via the helicase C-terminal domain) (PubMed:23871209). Interacts (via the helicase C-terminal domain) with MAVS (By similarity).</text>
</comment>
<comment type="interaction">
    <interactant intactId="EBI-2512405">
        <id>Q9H6R0</id>
    </interactant>
    <interactant intactId="EBI-2512419">
        <id>Q9P275</id>
        <label>USP36</label>
    </interactant>
    <organismsDiffer>false</organismsDiffer>
    <experiments>5</experiments>
</comment>
<comment type="subcellular location">
    <subcellularLocation>
        <location evidence="6 8">Nucleus</location>
        <location evidence="6 8">Nucleolus</location>
    </subcellularLocation>
    <subcellularLocation>
        <location evidence="6">Nucleus</location>
        <location evidence="6">Nucleoplasm</location>
    </subcellularLocation>
    <subcellularLocation>
        <location evidence="7 8">Cytoplasm</location>
    </subcellularLocation>
    <subcellularLocation>
        <location evidence="7">Nucleus</location>
    </subcellularLocation>
    <subcellularLocation>
        <location evidence="7">Inflammasome</location>
    </subcellularLocation>
    <text evidence="6 7">Predominantly in the nucleolus. During mitosis, localizes with the nucleolar organizing regions (PubMed:21930779). Upon dsRNA-binding, localizes in the inflammasome (PubMed:23871209).</text>
</comment>
<comment type="alternative products">
    <event type="alternative splicing"/>
    <isoform>
        <id>Q9H6R0-1</id>
        <name>1</name>
        <sequence type="displayed"/>
    </isoform>
    <isoform>
        <id>Q9H6R0-2</id>
        <name>2</name>
        <sequence type="described" ref="VSP_016256"/>
    </isoform>
</comment>
<comment type="PTM">
    <text evidence="2">Ubiquitinated, leading to its degradation by the proteasome. Deubiquitinated by USP36.</text>
</comment>
<comment type="similarity">
    <text evidence="11">Belongs to the DEAD box helicase family. DEAH subfamily.</text>
</comment>
<comment type="sequence caution" evidence="11">
    <conflict type="erroneous initiation">
        <sequence resource="EMBL-CDS" id="AAH30017"/>
    </conflict>
    <text>Extended N-terminus.</text>
</comment>
<name>DHX33_HUMAN</name>
<gene>
    <name evidence="12" type="primary">DHX33</name>
    <name type="synonym">DDX33</name>
</gene>
<accession>Q9H6R0</accession>
<accession>B4DHF9</accession>
<accession>Q4G149</accession>
<accession>Q5CZ73</accession>
<accession>Q9H5M9</accession>
<feature type="chain" id="PRO_0000055164" description="ATP-dependent RNA helicase DHX33">
    <location>
        <begin position="1"/>
        <end position="707"/>
    </location>
</feature>
<feature type="domain" description="Helicase ATP-binding" evidence="3">
    <location>
        <begin position="84"/>
        <end position="252"/>
    </location>
</feature>
<feature type="domain" description="Helicase C-terminal" evidence="4">
    <location>
        <begin position="277"/>
        <end position="450"/>
    </location>
</feature>
<feature type="region of interest" description="Required for nucleolar location" evidence="8">
    <location>
        <begin position="1"/>
        <end position="80"/>
    </location>
</feature>
<feature type="region of interest" description="Disordered" evidence="5">
    <location>
        <begin position="1"/>
        <end position="64"/>
    </location>
</feature>
<feature type="region of interest" description="HA2; required for interaction with EIF3G and RPL26" evidence="8">
    <location>
        <begin position="471"/>
        <end position="562"/>
    </location>
</feature>
<feature type="short sequence motif" description="DEAH box">
    <location>
        <begin position="194"/>
        <end position="197"/>
    </location>
</feature>
<feature type="short sequence motif" description="Critical for rDNA-binding" evidence="1">
    <location>
        <begin position="547"/>
        <end position="558"/>
    </location>
</feature>
<feature type="compositionally biased region" description="Gly residues" evidence="5">
    <location>
        <begin position="39"/>
        <end position="49"/>
    </location>
</feature>
<feature type="compositionally biased region" description="Low complexity" evidence="5">
    <location>
        <begin position="50"/>
        <end position="64"/>
    </location>
</feature>
<feature type="binding site" evidence="3">
    <location>
        <begin position="97"/>
        <end position="104"/>
    </location>
    <ligand>
        <name>ATP</name>
        <dbReference type="ChEBI" id="CHEBI:30616"/>
    </ligand>
</feature>
<feature type="splice variant" id="VSP_016256" description="In isoform 2." evidence="9 10">
    <location>
        <begin position="1"/>
        <end position="173"/>
    </location>
</feature>
<feature type="sequence variant" id="VAR_057239" description="In dbSNP:rs8069315.">
    <original>R</original>
    <variation>C</variation>
    <location>
        <position position="118"/>
    </location>
</feature>
<feature type="sequence variant" id="VAR_057240" description="In dbSNP:rs11653658.">
    <original>H</original>
    <variation>D</variation>
    <location>
        <position position="483"/>
    </location>
</feature>
<feature type="mutagenesis site" description="No effect on inflammasome activation upon dsRNA-binding." evidence="7">
    <original>K</original>
    <variation>N</variation>
    <location>
        <position position="103"/>
    </location>
</feature>
<feature type="sequence conflict" description="In Ref. 1; BAB15193." evidence="11" ref="1">
    <original>F</original>
    <variation>L</variation>
    <location>
        <position position="77"/>
    </location>
</feature>
<feature type="sequence conflict" description="In Ref. 1; BAB15193." evidence="11" ref="1">
    <original>R</original>
    <variation>G</variation>
    <location>
        <position position="166"/>
    </location>
</feature>
<feature type="sequence conflict" description="In Ref. 4; AAH30017." evidence="11" ref="4">
    <original>A</original>
    <variation>V</variation>
    <location>
        <position position="377"/>
    </location>
</feature>
<feature type="sequence conflict" description="In Ref. 6; CAI56793." evidence="11" ref="6">
    <original>P</original>
    <variation>S</variation>
    <location>
        <position position="539"/>
    </location>
</feature>